<proteinExistence type="evidence at transcript level"/>
<dbReference type="EMBL" id="CR376863">
    <property type="protein sequence ID" value="CAM16495.1"/>
    <property type="molecule type" value="Genomic_DNA"/>
</dbReference>
<dbReference type="EMBL" id="BC092949">
    <property type="protein sequence ID" value="AAH92949.1"/>
    <property type="molecule type" value="mRNA"/>
</dbReference>
<dbReference type="EMBL" id="BC152130">
    <property type="protein sequence ID" value="AAI52131.1"/>
    <property type="molecule type" value="mRNA"/>
</dbReference>
<dbReference type="RefSeq" id="NP_001017896.1">
    <property type="nucleotide sequence ID" value="NM_001017896.2"/>
</dbReference>
<dbReference type="SMR" id="Q568A0"/>
<dbReference type="BioGRID" id="95705">
    <property type="interactions" value="1"/>
</dbReference>
<dbReference type="FunCoup" id="Q568A0">
    <property type="interactions" value="643"/>
</dbReference>
<dbReference type="STRING" id="7955.ENSDARP00000045517"/>
<dbReference type="PaxDb" id="7955-ENSDARP00000045517"/>
<dbReference type="Ensembl" id="ENSDART00000045518">
    <property type="protein sequence ID" value="ENSDARP00000045517"/>
    <property type="gene ID" value="ENSDARG00000033126"/>
</dbReference>
<dbReference type="GeneID" id="550595"/>
<dbReference type="KEGG" id="dre:550595"/>
<dbReference type="AGR" id="ZFIN:ZDB-GENE-111011-2"/>
<dbReference type="CTD" id="79706"/>
<dbReference type="ZFIN" id="ZDB-GENE-111011-2">
    <property type="gene designation" value="prkrip1"/>
</dbReference>
<dbReference type="eggNOG" id="KOG4055">
    <property type="taxonomic scope" value="Eukaryota"/>
</dbReference>
<dbReference type="HOGENOM" id="CLU_079129_2_0_1"/>
<dbReference type="InParanoid" id="Q568A0"/>
<dbReference type="OMA" id="ETPSFIM"/>
<dbReference type="OrthoDB" id="10067079at2759"/>
<dbReference type="PhylomeDB" id="Q568A0"/>
<dbReference type="TreeFam" id="TF314382"/>
<dbReference type="Reactome" id="R-DRE-72163">
    <property type="pathway name" value="mRNA Splicing - Major Pathway"/>
</dbReference>
<dbReference type="PRO" id="PR:Q568A0"/>
<dbReference type="Proteomes" id="UP000000437">
    <property type="component" value="Alternate scaffold 5"/>
</dbReference>
<dbReference type="Proteomes" id="UP000000437">
    <property type="component" value="Chromosome 5"/>
</dbReference>
<dbReference type="Bgee" id="ENSDARG00000033126">
    <property type="expression patterns" value="Expressed in cleaving embryo and 26 other cell types or tissues"/>
</dbReference>
<dbReference type="ExpressionAtlas" id="Q568A0">
    <property type="expression patterns" value="baseline"/>
</dbReference>
<dbReference type="GO" id="GO:0005730">
    <property type="term" value="C:nucleolus"/>
    <property type="evidence" value="ECO:0000318"/>
    <property type="project" value="GO_Central"/>
</dbReference>
<dbReference type="GO" id="GO:0005681">
    <property type="term" value="C:spliceosomal complex"/>
    <property type="evidence" value="ECO:0007669"/>
    <property type="project" value="UniProtKB-KW"/>
</dbReference>
<dbReference type="GO" id="GO:0003725">
    <property type="term" value="F:double-stranded RNA binding"/>
    <property type="evidence" value="ECO:0000318"/>
    <property type="project" value="GO_Central"/>
</dbReference>
<dbReference type="GO" id="GO:0019901">
    <property type="term" value="F:protein kinase binding"/>
    <property type="evidence" value="ECO:0000318"/>
    <property type="project" value="GO_Central"/>
</dbReference>
<dbReference type="GO" id="GO:0004860">
    <property type="term" value="F:protein kinase inhibitor activity"/>
    <property type="evidence" value="ECO:0000318"/>
    <property type="project" value="GO_Central"/>
</dbReference>
<dbReference type="GO" id="GO:0006397">
    <property type="term" value="P:mRNA processing"/>
    <property type="evidence" value="ECO:0007669"/>
    <property type="project" value="UniProtKB-KW"/>
</dbReference>
<dbReference type="GO" id="GO:0008380">
    <property type="term" value="P:RNA splicing"/>
    <property type="evidence" value="ECO:0007669"/>
    <property type="project" value="UniProtKB-KW"/>
</dbReference>
<dbReference type="InterPro" id="IPR009548">
    <property type="entry name" value="Prkrip1"/>
</dbReference>
<dbReference type="PANTHER" id="PTHR13507">
    <property type="entry name" value="PRKR-INTERACTING PROTEIN 1"/>
    <property type="match status" value="1"/>
</dbReference>
<dbReference type="PANTHER" id="PTHR13507:SF0">
    <property type="entry name" value="PRKR-INTERACTING PROTEIN 1"/>
    <property type="match status" value="1"/>
</dbReference>
<dbReference type="Pfam" id="PF06658">
    <property type="entry name" value="DUF1168"/>
    <property type="match status" value="1"/>
</dbReference>
<accession>Q568A0</accession>
<protein>
    <recommendedName>
        <fullName>PRKR-interacting protein 1 homolog</fullName>
    </recommendedName>
</protein>
<feature type="chain" id="PRO_0000324791" description="PRKR-interacting protein 1 homolog">
    <location>
        <begin position="1"/>
        <end position="182"/>
    </location>
</feature>
<feature type="region of interest" description="Disordered" evidence="5">
    <location>
        <begin position="1"/>
        <end position="80"/>
    </location>
</feature>
<feature type="region of interest" description="Required for RNA-binding" evidence="1">
    <location>
        <begin position="51"/>
        <end position="143"/>
    </location>
</feature>
<feature type="region of interest" description="Disordered" evidence="5">
    <location>
        <begin position="114"/>
        <end position="182"/>
    </location>
</feature>
<feature type="region of interest" description="Required for nuclear localization" evidence="1">
    <location>
        <begin position="126"/>
        <end position="138"/>
    </location>
</feature>
<feature type="coiled-coil region" evidence="4">
    <location>
        <begin position="99"/>
        <end position="157"/>
    </location>
</feature>
<feature type="compositionally biased region" description="Basic and acidic residues" evidence="5">
    <location>
        <begin position="1"/>
        <end position="18"/>
    </location>
</feature>
<feature type="compositionally biased region" description="Basic and acidic residues" evidence="5">
    <location>
        <begin position="27"/>
        <end position="43"/>
    </location>
</feature>
<feature type="compositionally biased region" description="Basic and acidic residues" evidence="5">
    <location>
        <begin position="114"/>
        <end position="124"/>
    </location>
</feature>
<feature type="compositionally biased region" description="Basic residues" evidence="5">
    <location>
        <begin position="125"/>
        <end position="143"/>
    </location>
</feature>
<feature type="compositionally biased region" description="Basic and acidic residues" evidence="5">
    <location>
        <begin position="144"/>
        <end position="156"/>
    </location>
</feature>
<feature type="compositionally biased region" description="Acidic residues" evidence="5">
    <location>
        <begin position="164"/>
        <end position="173"/>
    </location>
</feature>
<keyword id="KW-0175">Coiled coil</keyword>
<keyword id="KW-0507">mRNA processing</keyword>
<keyword id="KW-0508">mRNA splicing</keyword>
<keyword id="KW-0539">Nucleus</keyword>
<keyword id="KW-1185">Reference proteome</keyword>
<keyword id="KW-0747">Spliceosome</keyword>
<comment type="function">
    <text evidence="2 3">Required for pre-mRNA splicing as component of the spliceosome (By similarity). Binds double-stranded RNA (By similarity).</text>
</comment>
<comment type="subunit">
    <text evidence="3">Component of the pre-catalytic and post-catalytic spliceosome complexes.</text>
</comment>
<comment type="subcellular location">
    <subcellularLocation>
        <location evidence="3">Nucleus</location>
    </subcellularLocation>
    <subcellularLocation>
        <location evidence="2">Nucleus</location>
        <location evidence="2">Nucleolus</location>
    </subcellularLocation>
</comment>
<comment type="similarity">
    <text evidence="6">Belongs to the PRKRIP1 family.</text>
</comment>
<reference key="1">
    <citation type="journal article" date="2013" name="Nature">
        <title>The zebrafish reference genome sequence and its relationship to the human genome.</title>
        <authorList>
            <person name="Howe K."/>
            <person name="Clark M.D."/>
            <person name="Torroja C.F."/>
            <person name="Torrance J."/>
            <person name="Berthelot C."/>
            <person name="Muffato M."/>
            <person name="Collins J.E."/>
            <person name="Humphray S."/>
            <person name="McLaren K."/>
            <person name="Matthews L."/>
            <person name="McLaren S."/>
            <person name="Sealy I."/>
            <person name="Caccamo M."/>
            <person name="Churcher C."/>
            <person name="Scott C."/>
            <person name="Barrett J.C."/>
            <person name="Koch R."/>
            <person name="Rauch G.J."/>
            <person name="White S."/>
            <person name="Chow W."/>
            <person name="Kilian B."/>
            <person name="Quintais L.T."/>
            <person name="Guerra-Assuncao J.A."/>
            <person name="Zhou Y."/>
            <person name="Gu Y."/>
            <person name="Yen J."/>
            <person name="Vogel J.H."/>
            <person name="Eyre T."/>
            <person name="Redmond S."/>
            <person name="Banerjee R."/>
            <person name="Chi J."/>
            <person name="Fu B."/>
            <person name="Langley E."/>
            <person name="Maguire S.F."/>
            <person name="Laird G.K."/>
            <person name="Lloyd D."/>
            <person name="Kenyon E."/>
            <person name="Donaldson S."/>
            <person name="Sehra H."/>
            <person name="Almeida-King J."/>
            <person name="Loveland J."/>
            <person name="Trevanion S."/>
            <person name="Jones M."/>
            <person name="Quail M."/>
            <person name="Willey D."/>
            <person name="Hunt A."/>
            <person name="Burton J."/>
            <person name="Sims S."/>
            <person name="McLay K."/>
            <person name="Plumb B."/>
            <person name="Davis J."/>
            <person name="Clee C."/>
            <person name="Oliver K."/>
            <person name="Clark R."/>
            <person name="Riddle C."/>
            <person name="Elliot D."/>
            <person name="Threadgold G."/>
            <person name="Harden G."/>
            <person name="Ware D."/>
            <person name="Begum S."/>
            <person name="Mortimore B."/>
            <person name="Kerry G."/>
            <person name="Heath P."/>
            <person name="Phillimore B."/>
            <person name="Tracey A."/>
            <person name="Corby N."/>
            <person name="Dunn M."/>
            <person name="Johnson C."/>
            <person name="Wood J."/>
            <person name="Clark S."/>
            <person name="Pelan S."/>
            <person name="Griffiths G."/>
            <person name="Smith M."/>
            <person name="Glithero R."/>
            <person name="Howden P."/>
            <person name="Barker N."/>
            <person name="Lloyd C."/>
            <person name="Stevens C."/>
            <person name="Harley J."/>
            <person name="Holt K."/>
            <person name="Panagiotidis G."/>
            <person name="Lovell J."/>
            <person name="Beasley H."/>
            <person name="Henderson C."/>
            <person name="Gordon D."/>
            <person name="Auger K."/>
            <person name="Wright D."/>
            <person name="Collins J."/>
            <person name="Raisen C."/>
            <person name="Dyer L."/>
            <person name="Leung K."/>
            <person name="Robertson L."/>
            <person name="Ambridge K."/>
            <person name="Leongamornlert D."/>
            <person name="McGuire S."/>
            <person name="Gilderthorp R."/>
            <person name="Griffiths C."/>
            <person name="Manthravadi D."/>
            <person name="Nichol S."/>
            <person name="Barker G."/>
            <person name="Whitehead S."/>
            <person name="Kay M."/>
            <person name="Brown J."/>
            <person name="Murnane C."/>
            <person name="Gray E."/>
            <person name="Humphries M."/>
            <person name="Sycamore N."/>
            <person name="Barker D."/>
            <person name="Saunders D."/>
            <person name="Wallis J."/>
            <person name="Babbage A."/>
            <person name="Hammond S."/>
            <person name="Mashreghi-Mohammadi M."/>
            <person name="Barr L."/>
            <person name="Martin S."/>
            <person name="Wray P."/>
            <person name="Ellington A."/>
            <person name="Matthews N."/>
            <person name="Ellwood M."/>
            <person name="Woodmansey R."/>
            <person name="Clark G."/>
            <person name="Cooper J."/>
            <person name="Tromans A."/>
            <person name="Grafham D."/>
            <person name="Skuce C."/>
            <person name="Pandian R."/>
            <person name="Andrews R."/>
            <person name="Harrison E."/>
            <person name="Kimberley A."/>
            <person name="Garnett J."/>
            <person name="Fosker N."/>
            <person name="Hall R."/>
            <person name="Garner P."/>
            <person name="Kelly D."/>
            <person name="Bird C."/>
            <person name="Palmer S."/>
            <person name="Gehring I."/>
            <person name="Berger A."/>
            <person name="Dooley C.M."/>
            <person name="Ersan-Urun Z."/>
            <person name="Eser C."/>
            <person name="Geiger H."/>
            <person name="Geisler M."/>
            <person name="Karotki L."/>
            <person name="Kirn A."/>
            <person name="Konantz J."/>
            <person name="Konantz M."/>
            <person name="Oberlander M."/>
            <person name="Rudolph-Geiger S."/>
            <person name="Teucke M."/>
            <person name="Lanz C."/>
            <person name="Raddatz G."/>
            <person name="Osoegawa K."/>
            <person name="Zhu B."/>
            <person name="Rapp A."/>
            <person name="Widaa S."/>
            <person name="Langford C."/>
            <person name="Yang F."/>
            <person name="Schuster S.C."/>
            <person name="Carter N.P."/>
            <person name="Harrow J."/>
            <person name="Ning Z."/>
            <person name="Herrero J."/>
            <person name="Searle S.M."/>
            <person name="Enright A."/>
            <person name="Geisler R."/>
            <person name="Plasterk R.H."/>
            <person name="Lee C."/>
            <person name="Westerfield M."/>
            <person name="de Jong P.J."/>
            <person name="Zon L.I."/>
            <person name="Postlethwait J.H."/>
            <person name="Nusslein-Volhard C."/>
            <person name="Hubbard T.J."/>
            <person name="Roest Crollius H."/>
            <person name="Rogers J."/>
            <person name="Stemple D.L."/>
        </authorList>
    </citation>
    <scope>NUCLEOTIDE SEQUENCE [LARGE SCALE GENOMIC DNA]</scope>
    <source>
        <strain>Tuebingen</strain>
    </source>
</reference>
<reference key="2">
    <citation type="submission" date="2005-04" db="EMBL/GenBank/DDBJ databases">
        <authorList>
            <consortium name="NIH - Zebrafish Gene Collection (ZGC) project"/>
        </authorList>
    </citation>
    <scope>NUCLEOTIDE SEQUENCE [LARGE SCALE MRNA]</scope>
    <source>
        <tissue>Embryo</tissue>
    </source>
</reference>
<evidence type="ECO:0000250" key="1"/>
<evidence type="ECO:0000250" key="2">
    <source>
        <dbReference type="UniProtKB" id="Q9CWV6"/>
    </source>
</evidence>
<evidence type="ECO:0000250" key="3">
    <source>
        <dbReference type="UniProtKB" id="Q9H875"/>
    </source>
</evidence>
<evidence type="ECO:0000255" key="4"/>
<evidence type="ECO:0000256" key="5">
    <source>
        <dbReference type="SAM" id="MobiDB-lite"/>
    </source>
</evidence>
<evidence type="ECO:0000305" key="6"/>
<organism>
    <name type="scientific">Danio rerio</name>
    <name type="common">Zebrafish</name>
    <name type="synonym">Brachydanio rerio</name>
    <dbReference type="NCBI Taxonomy" id="7955"/>
    <lineage>
        <taxon>Eukaryota</taxon>
        <taxon>Metazoa</taxon>
        <taxon>Chordata</taxon>
        <taxon>Craniata</taxon>
        <taxon>Vertebrata</taxon>
        <taxon>Euteleostomi</taxon>
        <taxon>Actinopterygii</taxon>
        <taxon>Neopterygii</taxon>
        <taxon>Teleostei</taxon>
        <taxon>Ostariophysi</taxon>
        <taxon>Cypriniformes</taxon>
        <taxon>Danionidae</taxon>
        <taxon>Danioninae</taxon>
        <taxon>Danio</taxon>
    </lineage>
</organism>
<gene>
    <name type="primary">prkrip1</name>
    <name type="ORF">si:dkey-93f15.1</name>
    <name type="ORF">zgc:110608</name>
</gene>
<sequence>MAVENKDARPGKALKKESQPLIIAKTPAEEQRLKLERLMRNPDKAAPIPEKPKEWNPRAPPEFVRDVMGSSAGAGSGEFHVYRHLRRREYQRQDFLERLSEKQKLDEEYKEKLIENQKAAEDRTAKRRKKREKLKQKKLMAKKAKMESQKEEDSEKSSSSSASEGEEKDDDAEVPSFIMGKR</sequence>
<name>PKRI1_DANRE</name>